<feature type="chain" id="PRO_0000262981" description="Putative ribose/galactose/methyl galactoside import ATP-binding protein">
    <location>
        <begin position="1"/>
        <end position="515"/>
    </location>
</feature>
<feature type="domain" description="ABC transporter 1" evidence="1">
    <location>
        <begin position="26"/>
        <end position="262"/>
    </location>
</feature>
<feature type="domain" description="ABC transporter 2" evidence="1">
    <location>
        <begin position="272"/>
        <end position="511"/>
    </location>
</feature>
<feature type="binding site" evidence="1">
    <location>
        <begin position="58"/>
        <end position="65"/>
    </location>
    <ligand>
        <name>ATP</name>
        <dbReference type="ChEBI" id="CHEBI:30616"/>
    </ligand>
</feature>
<reference key="1">
    <citation type="journal article" date="2005" name="Nucleic Acids Res.">
        <title>Genomic blueprint of Hahella chejuensis, a marine microbe producing an algicidal agent.</title>
        <authorList>
            <person name="Jeong H."/>
            <person name="Yim J.H."/>
            <person name="Lee C."/>
            <person name="Choi S.-H."/>
            <person name="Park Y.K."/>
            <person name="Yoon S.H."/>
            <person name="Hur C.-G."/>
            <person name="Kang H.-Y."/>
            <person name="Kim D."/>
            <person name="Lee H.H."/>
            <person name="Park K.H."/>
            <person name="Park S.-H."/>
            <person name="Park H.-S."/>
            <person name="Lee H.K."/>
            <person name="Oh T.K."/>
            <person name="Kim J.F."/>
        </authorList>
    </citation>
    <scope>NUCLEOTIDE SEQUENCE [LARGE SCALE GENOMIC DNA]</scope>
    <source>
        <strain>KCTC 2396</strain>
    </source>
</reference>
<dbReference type="EC" id="7.5.2.11" evidence="1"/>
<dbReference type="EC" id="7.5.2.7" evidence="1"/>
<dbReference type="EMBL" id="CP000155">
    <property type="protein sequence ID" value="ABC28044.1"/>
    <property type="molecule type" value="Genomic_DNA"/>
</dbReference>
<dbReference type="RefSeq" id="WP_011395119.1">
    <property type="nucleotide sequence ID" value="NC_007645.1"/>
</dbReference>
<dbReference type="SMR" id="Q2SMT0"/>
<dbReference type="STRING" id="349521.HCH_01167"/>
<dbReference type="KEGG" id="hch:HCH_01167"/>
<dbReference type="eggNOG" id="COG1129">
    <property type="taxonomic scope" value="Bacteria"/>
</dbReference>
<dbReference type="HOGENOM" id="CLU_000604_92_3_6"/>
<dbReference type="OrthoDB" id="9776369at2"/>
<dbReference type="Proteomes" id="UP000000238">
    <property type="component" value="Chromosome"/>
</dbReference>
<dbReference type="GO" id="GO:0005886">
    <property type="term" value="C:plasma membrane"/>
    <property type="evidence" value="ECO:0007669"/>
    <property type="project" value="UniProtKB-SubCell"/>
</dbReference>
<dbReference type="GO" id="GO:0015611">
    <property type="term" value="F:ABC-type D-ribose transporter activity"/>
    <property type="evidence" value="ECO:0007669"/>
    <property type="project" value="UniProtKB-EC"/>
</dbReference>
<dbReference type="GO" id="GO:0005524">
    <property type="term" value="F:ATP binding"/>
    <property type="evidence" value="ECO:0007669"/>
    <property type="project" value="UniProtKB-KW"/>
</dbReference>
<dbReference type="GO" id="GO:0016887">
    <property type="term" value="F:ATP hydrolysis activity"/>
    <property type="evidence" value="ECO:0007669"/>
    <property type="project" value="InterPro"/>
</dbReference>
<dbReference type="CDD" id="cd03216">
    <property type="entry name" value="ABC_Carb_Monos_I"/>
    <property type="match status" value="1"/>
</dbReference>
<dbReference type="CDD" id="cd03215">
    <property type="entry name" value="ABC_Carb_Monos_II"/>
    <property type="match status" value="1"/>
</dbReference>
<dbReference type="FunFam" id="3.40.50.300:FF:000126">
    <property type="entry name" value="Galactose/methyl galactoside import ATP-binding protein MglA"/>
    <property type="match status" value="1"/>
</dbReference>
<dbReference type="FunFam" id="3.40.50.300:FF:000127">
    <property type="entry name" value="Ribose import ATP-binding protein RbsA"/>
    <property type="match status" value="1"/>
</dbReference>
<dbReference type="Gene3D" id="3.40.50.300">
    <property type="entry name" value="P-loop containing nucleotide triphosphate hydrolases"/>
    <property type="match status" value="2"/>
</dbReference>
<dbReference type="InterPro" id="IPR003593">
    <property type="entry name" value="AAA+_ATPase"/>
</dbReference>
<dbReference type="InterPro" id="IPR050107">
    <property type="entry name" value="ABC_carbohydrate_import_ATPase"/>
</dbReference>
<dbReference type="InterPro" id="IPR003439">
    <property type="entry name" value="ABC_transporter-like_ATP-bd"/>
</dbReference>
<dbReference type="InterPro" id="IPR017871">
    <property type="entry name" value="ABC_transporter-like_CS"/>
</dbReference>
<dbReference type="InterPro" id="IPR027417">
    <property type="entry name" value="P-loop_NTPase"/>
</dbReference>
<dbReference type="PANTHER" id="PTHR43790">
    <property type="entry name" value="CARBOHYDRATE TRANSPORT ATP-BINDING PROTEIN MG119-RELATED"/>
    <property type="match status" value="1"/>
</dbReference>
<dbReference type="PANTHER" id="PTHR43790:SF7">
    <property type="entry name" value="GALACTOSE_METHYL GALACTOSIDE IMPORT ATP-BINDING PROTEIN MGLA"/>
    <property type="match status" value="1"/>
</dbReference>
<dbReference type="Pfam" id="PF00005">
    <property type="entry name" value="ABC_tran"/>
    <property type="match status" value="2"/>
</dbReference>
<dbReference type="SMART" id="SM00382">
    <property type="entry name" value="AAA"/>
    <property type="match status" value="2"/>
</dbReference>
<dbReference type="SUPFAM" id="SSF52540">
    <property type="entry name" value="P-loop containing nucleoside triphosphate hydrolases"/>
    <property type="match status" value="2"/>
</dbReference>
<dbReference type="PROSITE" id="PS00211">
    <property type="entry name" value="ABC_TRANSPORTER_1"/>
    <property type="match status" value="1"/>
</dbReference>
<dbReference type="PROSITE" id="PS50893">
    <property type="entry name" value="ABC_TRANSPORTER_2"/>
    <property type="match status" value="2"/>
</dbReference>
<dbReference type="PROSITE" id="PS51260">
    <property type="entry name" value="MGLA"/>
    <property type="match status" value="1"/>
</dbReference>
<dbReference type="PROSITE" id="PS51254">
    <property type="entry name" value="RBSA"/>
    <property type="match status" value="1"/>
</dbReference>
<organism>
    <name type="scientific">Hahella chejuensis (strain KCTC 2396)</name>
    <dbReference type="NCBI Taxonomy" id="349521"/>
    <lineage>
        <taxon>Bacteria</taxon>
        <taxon>Pseudomonadati</taxon>
        <taxon>Pseudomonadota</taxon>
        <taxon>Gammaproteobacteria</taxon>
        <taxon>Oceanospirillales</taxon>
        <taxon>Hahellaceae</taxon>
        <taxon>Hahella</taxon>
    </lineage>
</organism>
<comment type="function">
    <text evidence="1">Part of an ABC transporter complex involved in carbohydrate import. Could be involved in ribose, galactose and/or methyl galactoside import. Responsible for energy coupling to the transport system.</text>
</comment>
<comment type="catalytic activity">
    <reaction evidence="1">
        <text>D-ribose(out) + ATP + H2O = D-ribose(in) + ADP + phosphate + H(+)</text>
        <dbReference type="Rhea" id="RHEA:29903"/>
        <dbReference type="ChEBI" id="CHEBI:15377"/>
        <dbReference type="ChEBI" id="CHEBI:15378"/>
        <dbReference type="ChEBI" id="CHEBI:30616"/>
        <dbReference type="ChEBI" id="CHEBI:43474"/>
        <dbReference type="ChEBI" id="CHEBI:47013"/>
        <dbReference type="ChEBI" id="CHEBI:456216"/>
        <dbReference type="EC" id="7.5.2.7"/>
    </reaction>
</comment>
<comment type="catalytic activity">
    <reaction evidence="1">
        <text>D-galactose(out) + ATP + H2O = D-galactose(in) + ADP + phosphate + H(+)</text>
        <dbReference type="Rhea" id="RHEA:60156"/>
        <dbReference type="ChEBI" id="CHEBI:4139"/>
        <dbReference type="ChEBI" id="CHEBI:15377"/>
        <dbReference type="ChEBI" id="CHEBI:15378"/>
        <dbReference type="ChEBI" id="CHEBI:30616"/>
        <dbReference type="ChEBI" id="CHEBI:43474"/>
        <dbReference type="ChEBI" id="CHEBI:456216"/>
        <dbReference type="EC" id="7.5.2.11"/>
    </reaction>
</comment>
<comment type="subcellular location">
    <subcellularLocation>
        <location evidence="1">Cell inner membrane</location>
        <topology evidence="1">Peripheral membrane protein</topology>
    </subcellularLocation>
</comment>
<comment type="similarity">
    <text evidence="1">Belongs to the ABC transporter superfamily. Carbohydrate importer 2 (CUT2) (TC 3.A.1.2) family.</text>
</comment>
<name>RGMG_HAHCH</name>
<proteinExistence type="inferred from homology"/>
<gene>
    <name type="ordered locus">HCH_01167</name>
</gene>
<accession>Q2SMT0</accession>
<evidence type="ECO:0000255" key="1">
    <source>
        <dbReference type="HAMAP-Rule" id="MF_01717"/>
    </source>
</evidence>
<protein>
    <recommendedName>
        <fullName evidence="1">Putative ribose/galactose/methyl galactoside import ATP-binding protein</fullName>
        <ecNumber evidence="1">7.5.2.11</ecNumber>
        <ecNumber evidence="1">7.5.2.7</ecNumber>
    </recommendedName>
</protein>
<sequence>MSSASVVEAVSVNSAIPQNRNYEYVLEVANVRKEFPGVVALDNVSLRIRPGTVHALMGENGAGKSTLMKIIAGIYQPDKGQVLLRGEPVRLEKPLDAQEAGIAMIHQELLLMNPMTVAENIWIRREPKGRFGLIDHDEMRRRTQELFDRLNINLDPEAEISELSVASRQMVEIAKAVSFNSDVLIMDEPTSAITETEVAHLFDIIRDLRAKGIGIVYITHKMNELFEIADEFSVFRDGQYIGTHLSSNVTRDDIIRMMVGREVSQMFPKEEVALGDVVLSVKNLSREGVFRNVSFDVRAGEIVGFAGLVGSGRSNVAEALFGVAPADGGAIQINGEFVQIKSPNEAIQHGMAFLTEDRKETGCFLPLTIQENIQSAVLHQNFVKKGFVAEAELAKEAVEICNKLRVKTPGMDEVIENLSGGNQQKVLIGRWLLTHPKILILDEPTRGIDVGAKAEIHSLITQLAHKGVAVVMISSELPEILGMSDRVVVMHEGRVTGILDRAEADQVKIMDLAAQ</sequence>
<keyword id="KW-0067">ATP-binding</keyword>
<keyword id="KW-0997">Cell inner membrane</keyword>
<keyword id="KW-1003">Cell membrane</keyword>
<keyword id="KW-0472">Membrane</keyword>
<keyword id="KW-0547">Nucleotide-binding</keyword>
<keyword id="KW-1185">Reference proteome</keyword>
<keyword id="KW-0677">Repeat</keyword>
<keyword id="KW-0762">Sugar transport</keyword>
<keyword id="KW-1278">Translocase</keyword>
<keyword id="KW-0813">Transport</keyword>